<gene>
    <name evidence="1" type="primary">panB1</name>
    <name type="ordered locus">VF_2169</name>
</gene>
<comment type="function">
    <text evidence="1">Catalyzes the reversible reaction in which hydroxymethyl group from 5,10-methylenetetrahydrofolate is transferred onto alpha-ketoisovalerate to form ketopantoate.</text>
</comment>
<comment type="catalytic activity">
    <reaction evidence="1">
        <text>3-methyl-2-oxobutanoate + (6R)-5,10-methylene-5,6,7,8-tetrahydrofolate + H2O = 2-dehydropantoate + (6S)-5,6,7,8-tetrahydrofolate</text>
        <dbReference type="Rhea" id="RHEA:11824"/>
        <dbReference type="ChEBI" id="CHEBI:11561"/>
        <dbReference type="ChEBI" id="CHEBI:11851"/>
        <dbReference type="ChEBI" id="CHEBI:15377"/>
        <dbReference type="ChEBI" id="CHEBI:15636"/>
        <dbReference type="ChEBI" id="CHEBI:57453"/>
        <dbReference type="EC" id="2.1.2.11"/>
    </reaction>
</comment>
<comment type="cofactor">
    <cofactor evidence="1">
        <name>Mg(2+)</name>
        <dbReference type="ChEBI" id="CHEBI:18420"/>
    </cofactor>
    <text evidence="1">Binds 1 Mg(2+) ion per subunit.</text>
</comment>
<comment type="pathway">
    <text evidence="1">Cofactor biosynthesis; (R)-pantothenate biosynthesis; (R)-pantoate from 3-methyl-2-oxobutanoate: step 1/2.</text>
</comment>
<comment type="subunit">
    <text evidence="1">Homodecamer; pentamer of dimers.</text>
</comment>
<comment type="subcellular location">
    <subcellularLocation>
        <location evidence="1">Cytoplasm</location>
    </subcellularLocation>
</comment>
<comment type="similarity">
    <text evidence="1">Belongs to the PanB family.</text>
</comment>
<feature type="chain" id="PRO_0000297408" description="3-methyl-2-oxobutanoate hydroxymethyltransferase 1">
    <location>
        <begin position="1"/>
        <end position="264"/>
    </location>
</feature>
<feature type="active site" description="Proton acceptor" evidence="1">
    <location>
        <position position="181"/>
    </location>
</feature>
<feature type="binding site" evidence="1">
    <location>
        <begin position="45"/>
        <end position="46"/>
    </location>
    <ligand>
        <name>3-methyl-2-oxobutanoate</name>
        <dbReference type="ChEBI" id="CHEBI:11851"/>
    </ligand>
</feature>
<feature type="binding site" evidence="1">
    <location>
        <position position="45"/>
    </location>
    <ligand>
        <name>Mg(2+)</name>
        <dbReference type="ChEBI" id="CHEBI:18420"/>
    </ligand>
</feature>
<feature type="binding site" evidence="1">
    <location>
        <position position="84"/>
    </location>
    <ligand>
        <name>3-methyl-2-oxobutanoate</name>
        <dbReference type="ChEBI" id="CHEBI:11851"/>
    </ligand>
</feature>
<feature type="binding site" evidence="1">
    <location>
        <position position="84"/>
    </location>
    <ligand>
        <name>Mg(2+)</name>
        <dbReference type="ChEBI" id="CHEBI:18420"/>
    </ligand>
</feature>
<feature type="binding site" evidence="1">
    <location>
        <position position="112"/>
    </location>
    <ligand>
        <name>3-methyl-2-oxobutanoate</name>
        <dbReference type="ChEBI" id="CHEBI:11851"/>
    </ligand>
</feature>
<feature type="binding site" evidence="1">
    <location>
        <position position="114"/>
    </location>
    <ligand>
        <name>Mg(2+)</name>
        <dbReference type="ChEBI" id="CHEBI:18420"/>
    </ligand>
</feature>
<sequence>MKKISIHDLMKWKQEGKKFATVTAYDASFAQLFEQQEVPVLLVGDSLGMVLQGKSDTLPVTTEEIAYHTRCVRAGSPNSLLMADMPFMSYATPEQACENAGKLMQAGANMVKIEGGEWIAETVRVLAERAVPVCAHLGLTPQSVNIFGGFRIQGRDEAKAEQMVKDALTLEAAGAQIILLECVPASLAERITKACTVPVIGIGAGNVTDGQILVMHDMFGISANYMPKFSKNFLAETGDMRKAVTKYIQDVEQGVFPVAEHTFN</sequence>
<evidence type="ECO:0000255" key="1">
    <source>
        <dbReference type="HAMAP-Rule" id="MF_00156"/>
    </source>
</evidence>
<accession>Q5E2T2</accession>
<reference key="1">
    <citation type="journal article" date="2005" name="Proc. Natl. Acad. Sci. U.S.A.">
        <title>Complete genome sequence of Vibrio fischeri: a symbiotic bacterium with pathogenic congeners.</title>
        <authorList>
            <person name="Ruby E.G."/>
            <person name="Urbanowski M."/>
            <person name="Campbell J."/>
            <person name="Dunn A."/>
            <person name="Faini M."/>
            <person name="Gunsalus R."/>
            <person name="Lostroh P."/>
            <person name="Lupp C."/>
            <person name="McCann J."/>
            <person name="Millikan D."/>
            <person name="Schaefer A."/>
            <person name="Stabb E."/>
            <person name="Stevens A."/>
            <person name="Visick K."/>
            <person name="Whistler C."/>
            <person name="Greenberg E.P."/>
        </authorList>
    </citation>
    <scope>NUCLEOTIDE SEQUENCE [LARGE SCALE GENOMIC DNA]</scope>
    <source>
        <strain>ATCC 700601 / ES114</strain>
    </source>
</reference>
<proteinExistence type="inferred from homology"/>
<keyword id="KW-0963">Cytoplasm</keyword>
<keyword id="KW-0460">Magnesium</keyword>
<keyword id="KW-0479">Metal-binding</keyword>
<keyword id="KW-0566">Pantothenate biosynthesis</keyword>
<keyword id="KW-1185">Reference proteome</keyword>
<keyword id="KW-0808">Transferase</keyword>
<dbReference type="EC" id="2.1.2.11" evidence="1"/>
<dbReference type="EMBL" id="CP000020">
    <property type="protein sequence ID" value="AAW86664.1"/>
    <property type="molecule type" value="Genomic_DNA"/>
</dbReference>
<dbReference type="RefSeq" id="WP_011262611.1">
    <property type="nucleotide sequence ID" value="NC_006840.2"/>
</dbReference>
<dbReference type="RefSeq" id="YP_205552.1">
    <property type="nucleotide sequence ID" value="NC_006840.2"/>
</dbReference>
<dbReference type="SMR" id="Q5E2T2"/>
<dbReference type="STRING" id="312309.VF_2169"/>
<dbReference type="EnsemblBacteria" id="AAW86664">
    <property type="protein sequence ID" value="AAW86664"/>
    <property type="gene ID" value="VF_2169"/>
</dbReference>
<dbReference type="GeneID" id="54164887"/>
<dbReference type="KEGG" id="vfi:VF_2169"/>
<dbReference type="PATRIC" id="fig|312309.11.peg.2210"/>
<dbReference type="eggNOG" id="COG0413">
    <property type="taxonomic scope" value="Bacteria"/>
</dbReference>
<dbReference type="HOGENOM" id="CLU_036645_1_0_6"/>
<dbReference type="OrthoDB" id="9781789at2"/>
<dbReference type="UniPathway" id="UPA00028">
    <property type="reaction ID" value="UER00003"/>
</dbReference>
<dbReference type="Proteomes" id="UP000000537">
    <property type="component" value="Chromosome I"/>
</dbReference>
<dbReference type="GO" id="GO:0005737">
    <property type="term" value="C:cytoplasm"/>
    <property type="evidence" value="ECO:0007669"/>
    <property type="project" value="UniProtKB-SubCell"/>
</dbReference>
<dbReference type="GO" id="GO:0003864">
    <property type="term" value="F:3-methyl-2-oxobutanoate hydroxymethyltransferase activity"/>
    <property type="evidence" value="ECO:0007669"/>
    <property type="project" value="UniProtKB-UniRule"/>
</dbReference>
<dbReference type="GO" id="GO:0000287">
    <property type="term" value="F:magnesium ion binding"/>
    <property type="evidence" value="ECO:0007669"/>
    <property type="project" value="TreeGrafter"/>
</dbReference>
<dbReference type="GO" id="GO:0015940">
    <property type="term" value="P:pantothenate biosynthetic process"/>
    <property type="evidence" value="ECO:0007669"/>
    <property type="project" value="UniProtKB-UniRule"/>
</dbReference>
<dbReference type="CDD" id="cd06557">
    <property type="entry name" value="KPHMT-like"/>
    <property type="match status" value="1"/>
</dbReference>
<dbReference type="FunFam" id="3.20.20.60:FF:000003">
    <property type="entry name" value="3-methyl-2-oxobutanoate hydroxymethyltransferase"/>
    <property type="match status" value="1"/>
</dbReference>
<dbReference type="Gene3D" id="3.20.20.60">
    <property type="entry name" value="Phosphoenolpyruvate-binding domains"/>
    <property type="match status" value="1"/>
</dbReference>
<dbReference type="HAMAP" id="MF_00156">
    <property type="entry name" value="PanB"/>
    <property type="match status" value="1"/>
</dbReference>
<dbReference type="InterPro" id="IPR003700">
    <property type="entry name" value="Pantoate_hydroxy_MeTrfase"/>
</dbReference>
<dbReference type="InterPro" id="IPR015813">
    <property type="entry name" value="Pyrv/PenolPyrv_kinase-like_dom"/>
</dbReference>
<dbReference type="InterPro" id="IPR040442">
    <property type="entry name" value="Pyrv_kinase-like_dom_sf"/>
</dbReference>
<dbReference type="NCBIfam" id="TIGR00222">
    <property type="entry name" value="panB"/>
    <property type="match status" value="1"/>
</dbReference>
<dbReference type="NCBIfam" id="NF001452">
    <property type="entry name" value="PRK00311.1"/>
    <property type="match status" value="1"/>
</dbReference>
<dbReference type="PANTHER" id="PTHR20881">
    <property type="entry name" value="3-METHYL-2-OXOBUTANOATE HYDROXYMETHYLTRANSFERASE"/>
    <property type="match status" value="1"/>
</dbReference>
<dbReference type="PANTHER" id="PTHR20881:SF0">
    <property type="entry name" value="3-METHYL-2-OXOBUTANOATE HYDROXYMETHYLTRANSFERASE"/>
    <property type="match status" value="1"/>
</dbReference>
<dbReference type="Pfam" id="PF02548">
    <property type="entry name" value="Pantoate_transf"/>
    <property type="match status" value="1"/>
</dbReference>
<dbReference type="PIRSF" id="PIRSF000388">
    <property type="entry name" value="Pantoate_hydroxy_MeTrfase"/>
    <property type="match status" value="1"/>
</dbReference>
<dbReference type="SUPFAM" id="SSF51621">
    <property type="entry name" value="Phosphoenolpyruvate/pyruvate domain"/>
    <property type="match status" value="1"/>
</dbReference>
<organism>
    <name type="scientific">Aliivibrio fischeri (strain ATCC 700601 / ES114)</name>
    <name type="common">Vibrio fischeri</name>
    <dbReference type="NCBI Taxonomy" id="312309"/>
    <lineage>
        <taxon>Bacteria</taxon>
        <taxon>Pseudomonadati</taxon>
        <taxon>Pseudomonadota</taxon>
        <taxon>Gammaproteobacteria</taxon>
        <taxon>Vibrionales</taxon>
        <taxon>Vibrionaceae</taxon>
        <taxon>Aliivibrio</taxon>
    </lineage>
</organism>
<name>PANB1_ALIF1</name>
<protein>
    <recommendedName>
        <fullName evidence="1">3-methyl-2-oxobutanoate hydroxymethyltransferase 1</fullName>
        <ecNumber evidence="1">2.1.2.11</ecNumber>
    </recommendedName>
    <alternativeName>
        <fullName evidence="1">Ketopantoate hydroxymethyltransferase 1</fullName>
        <shortName evidence="1">KPHMT 1</shortName>
    </alternativeName>
</protein>